<accession>A4IY87</accession>
<sequence length="171" mass="18297">MVILGIDPGSRITGFGVIKVQDNKIYYVASGCIRITEITTPKRLKQIADGITQIINIYAPTEAAIEQIFMFQNPMGAIKLGQARGVAMCTLAINNLEVSEYSAKQIKQAVVGTGGAAKSQVQHMVQSLLGLSKKPPEDAADALAIAICHYHSSKSLAKISGASRVSQKRIK</sequence>
<dbReference type="EC" id="3.1.21.10" evidence="1"/>
<dbReference type="EMBL" id="CP000608">
    <property type="protein sequence ID" value="ABO46888.1"/>
    <property type="molecule type" value="Genomic_DNA"/>
</dbReference>
<dbReference type="RefSeq" id="WP_003026245.1">
    <property type="nucleotide sequence ID" value="NC_009257.1"/>
</dbReference>
<dbReference type="SMR" id="A4IY87"/>
<dbReference type="GeneID" id="75265238"/>
<dbReference type="KEGG" id="ftw:FTW_1072"/>
<dbReference type="HOGENOM" id="CLU_091257_2_1_6"/>
<dbReference type="GO" id="GO:0005737">
    <property type="term" value="C:cytoplasm"/>
    <property type="evidence" value="ECO:0007669"/>
    <property type="project" value="UniProtKB-SubCell"/>
</dbReference>
<dbReference type="GO" id="GO:0048476">
    <property type="term" value="C:Holliday junction resolvase complex"/>
    <property type="evidence" value="ECO:0007669"/>
    <property type="project" value="UniProtKB-UniRule"/>
</dbReference>
<dbReference type="GO" id="GO:0008821">
    <property type="term" value="F:crossover junction DNA endonuclease activity"/>
    <property type="evidence" value="ECO:0007669"/>
    <property type="project" value="UniProtKB-UniRule"/>
</dbReference>
<dbReference type="GO" id="GO:0003677">
    <property type="term" value="F:DNA binding"/>
    <property type="evidence" value="ECO:0007669"/>
    <property type="project" value="UniProtKB-KW"/>
</dbReference>
<dbReference type="GO" id="GO:0000287">
    <property type="term" value="F:magnesium ion binding"/>
    <property type="evidence" value="ECO:0007669"/>
    <property type="project" value="UniProtKB-UniRule"/>
</dbReference>
<dbReference type="GO" id="GO:0006310">
    <property type="term" value="P:DNA recombination"/>
    <property type="evidence" value="ECO:0007669"/>
    <property type="project" value="UniProtKB-UniRule"/>
</dbReference>
<dbReference type="GO" id="GO:0006281">
    <property type="term" value="P:DNA repair"/>
    <property type="evidence" value="ECO:0007669"/>
    <property type="project" value="UniProtKB-UniRule"/>
</dbReference>
<dbReference type="CDD" id="cd16962">
    <property type="entry name" value="RuvC"/>
    <property type="match status" value="1"/>
</dbReference>
<dbReference type="FunFam" id="3.30.420.10:FF:000002">
    <property type="entry name" value="Crossover junction endodeoxyribonuclease RuvC"/>
    <property type="match status" value="1"/>
</dbReference>
<dbReference type="Gene3D" id="3.30.420.10">
    <property type="entry name" value="Ribonuclease H-like superfamily/Ribonuclease H"/>
    <property type="match status" value="1"/>
</dbReference>
<dbReference type="HAMAP" id="MF_00034">
    <property type="entry name" value="RuvC"/>
    <property type="match status" value="1"/>
</dbReference>
<dbReference type="InterPro" id="IPR012337">
    <property type="entry name" value="RNaseH-like_sf"/>
</dbReference>
<dbReference type="InterPro" id="IPR036397">
    <property type="entry name" value="RNaseH_sf"/>
</dbReference>
<dbReference type="InterPro" id="IPR020563">
    <property type="entry name" value="X-over_junc_endoDNase_Mg_BS"/>
</dbReference>
<dbReference type="InterPro" id="IPR002176">
    <property type="entry name" value="X-over_junc_endoDNase_RuvC"/>
</dbReference>
<dbReference type="NCBIfam" id="NF000711">
    <property type="entry name" value="PRK00039.2-1"/>
    <property type="match status" value="1"/>
</dbReference>
<dbReference type="NCBIfam" id="TIGR00228">
    <property type="entry name" value="ruvC"/>
    <property type="match status" value="1"/>
</dbReference>
<dbReference type="PANTHER" id="PTHR30194">
    <property type="entry name" value="CROSSOVER JUNCTION ENDODEOXYRIBONUCLEASE RUVC"/>
    <property type="match status" value="1"/>
</dbReference>
<dbReference type="PANTHER" id="PTHR30194:SF3">
    <property type="entry name" value="CROSSOVER JUNCTION ENDODEOXYRIBONUCLEASE RUVC"/>
    <property type="match status" value="1"/>
</dbReference>
<dbReference type="Pfam" id="PF02075">
    <property type="entry name" value="RuvC"/>
    <property type="match status" value="1"/>
</dbReference>
<dbReference type="PRINTS" id="PR00696">
    <property type="entry name" value="RSOLVASERUVC"/>
</dbReference>
<dbReference type="SUPFAM" id="SSF53098">
    <property type="entry name" value="Ribonuclease H-like"/>
    <property type="match status" value="1"/>
</dbReference>
<dbReference type="PROSITE" id="PS01321">
    <property type="entry name" value="RUVC"/>
    <property type="match status" value="1"/>
</dbReference>
<organism>
    <name type="scientific">Francisella tularensis subsp. tularensis (strain WY96-3418)</name>
    <dbReference type="NCBI Taxonomy" id="418136"/>
    <lineage>
        <taxon>Bacteria</taxon>
        <taxon>Pseudomonadati</taxon>
        <taxon>Pseudomonadota</taxon>
        <taxon>Gammaproteobacteria</taxon>
        <taxon>Thiotrichales</taxon>
        <taxon>Francisellaceae</taxon>
        <taxon>Francisella</taxon>
    </lineage>
</organism>
<reference key="1">
    <citation type="journal article" date="2007" name="PLoS ONE">
        <title>Complete genomic characterization of a pathogenic A.II strain of Francisella tularensis subspecies tularensis.</title>
        <authorList>
            <person name="Beckstrom-Sternberg S.M."/>
            <person name="Auerbach R.K."/>
            <person name="Godbole S."/>
            <person name="Pearson J.V."/>
            <person name="Beckstrom-Sternberg J.S."/>
            <person name="Deng Z."/>
            <person name="Munk C."/>
            <person name="Kubota K."/>
            <person name="Zhou Y."/>
            <person name="Bruce D."/>
            <person name="Noronha J."/>
            <person name="Scheuermann R.H."/>
            <person name="Wang A."/>
            <person name="Wei X."/>
            <person name="Wang J."/>
            <person name="Hao J."/>
            <person name="Wagner D.M."/>
            <person name="Brettin T.S."/>
            <person name="Brown N."/>
            <person name="Gilna P."/>
            <person name="Keim P.S."/>
        </authorList>
    </citation>
    <scope>NUCLEOTIDE SEQUENCE [LARGE SCALE GENOMIC DNA]</scope>
    <source>
        <strain>WY96-3418</strain>
    </source>
</reference>
<proteinExistence type="inferred from homology"/>
<evidence type="ECO:0000255" key="1">
    <source>
        <dbReference type="HAMAP-Rule" id="MF_00034"/>
    </source>
</evidence>
<protein>
    <recommendedName>
        <fullName evidence="1">Crossover junction endodeoxyribonuclease RuvC</fullName>
        <ecNumber evidence="1">3.1.21.10</ecNumber>
    </recommendedName>
    <alternativeName>
        <fullName evidence="1">Holliday junction nuclease RuvC</fullName>
    </alternativeName>
    <alternativeName>
        <fullName evidence="1">Holliday junction resolvase RuvC</fullName>
    </alternativeName>
</protein>
<name>RUVC_FRATW</name>
<keyword id="KW-0963">Cytoplasm</keyword>
<keyword id="KW-0227">DNA damage</keyword>
<keyword id="KW-0233">DNA recombination</keyword>
<keyword id="KW-0234">DNA repair</keyword>
<keyword id="KW-0238">DNA-binding</keyword>
<keyword id="KW-0255">Endonuclease</keyword>
<keyword id="KW-0378">Hydrolase</keyword>
<keyword id="KW-0460">Magnesium</keyword>
<keyword id="KW-0479">Metal-binding</keyword>
<keyword id="KW-0540">Nuclease</keyword>
<gene>
    <name evidence="1" type="primary">ruvC</name>
    <name type="ordered locus">FTW_1072</name>
</gene>
<feature type="chain" id="PRO_1000002759" description="Crossover junction endodeoxyribonuclease RuvC">
    <location>
        <begin position="1"/>
        <end position="171"/>
    </location>
</feature>
<feature type="active site" evidence="1">
    <location>
        <position position="7"/>
    </location>
</feature>
<feature type="active site" evidence="1">
    <location>
        <position position="66"/>
    </location>
</feature>
<feature type="active site" evidence="1">
    <location>
        <position position="138"/>
    </location>
</feature>
<feature type="binding site" evidence="1">
    <location>
        <position position="7"/>
    </location>
    <ligand>
        <name>Mg(2+)</name>
        <dbReference type="ChEBI" id="CHEBI:18420"/>
        <label>1</label>
    </ligand>
</feature>
<feature type="binding site" evidence="1">
    <location>
        <position position="66"/>
    </location>
    <ligand>
        <name>Mg(2+)</name>
        <dbReference type="ChEBI" id="CHEBI:18420"/>
        <label>2</label>
    </ligand>
</feature>
<feature type="binding site" evidence="1">
    <location>
        <position position="138"/>
    </location>
    <ligand>
        <name>Mg(2+)</name>
        <dbReference type="ChEBI" id="CHEBI:18420"/>
        <label>1</label>
    </ligand>
</feature>
<comment type="function">
    <text evidence="1">The RuvA-RuvB-RuvC complex processes Holliday junction (HJ) DNA during genetic recombination and DNA repair. Endonuclease that resolves HJ intermediates. Cleaves cruciform DNA by making single-stranded nicks across the HJ at symmetrical positions within the homologous arms, yielding a 5'-phosphate and a 3'-hydroxyl group; requires a central core of homology in the junction. The consensus cleavage sequence is 5'-(A/T)TT(C/G)-3'. Cleavage occurs on the 3'-side of the TT dinucleotide at the point of strand exchange. HJ branch migration catalyzed by RuvA-RuvB allows RuvC to scan DNA until it finds its consensus sequence, where it cleaves and resolves the cruciform DNA.</text>
</comment>
<comment type="catalytic activity">
    <reaction evidence="1">
        <text>Endonucleolytic cleavage at a junction such as a reciprocal single-stranded crossover between two homologous DNA duplexes (Holliday junction).</text>
        <dbReference type="EC" id="3.1.21.10"/>
    </reaction>
</comment>
<comment type="cofactor">
    <cofactor evidence="1">
        <name>Mg(2+)</name>
        <dbReference type="ChEBI" id="CHEBI:18420"/>
    </cofactor>
    <text evidence="1">Binds 2 Mg(2+) ion per subunit.</text>
</comment>
<comment type="subunit">
    <text evidence="1">Homodimer which binds Holliday junction (HJ) DNA. The HJ becomes 2-fold symmetrical on binding to RuvC with unstacked arms; it has a different conformation from HJ DNA in complex with RuvA. In the full resolvosome a probable DNA-RuvA(4)-RuvB(12)-RuvC(2) complex forms which resolves the HJ.</text>
</comment>
<comment type="subcellular location">
    <subcellularLocation>
        <location evidence="1">Cytoplasm</location>
    </subcellularLocation>
</comment>
<comment type="similarity">
    <text evidence="1">Belongs to the RuvC family.</text>
</comment>